<gene>
    <name evidence="1" type="primary">atpH</name>
    <name type="ordered locus">TW341</name>
</gene>
<reference key="1">
    <citation type="journal article" date="2003" name="Lancet">
        <title>Sequencing and analysis of the genome of the Whipple's disease bacterium Tropheryma whipplei.</title>
        <authorList>
            <person name="Bentley S.D."/>
            <person name="Maiwald M."/>
            <person name="Murphy L.D."/>
            <person name="Pallen M.J."/>
            <person name="Yeats C.A."/>
            <person name="Dover L.G."/>
            <person name="Norbertczak H.T."/>
            <person name="Besra G.S."/>
            <person name="Quail M.A."/>
            <person name="Harris D.E."/>
            <person name="von Herbay A."/>
            <person name="Goble A."/>
            <person name="Rutter S."/>
            <person name="Squares R."/>
            <person name="Squares S."/>
            <person name="Barrell B.G."/>
            <person name="Parkhill J."/>
            <person name="Relman D.A."/>
        </authorList>
    </citation>
    <scope>NUCLEOTIDE SEQUENCE [LARGE SCALE GENOMIC DNA]</scope>
    <source>
        <strain>TW08/27</strain>
    </source>
</reference>
<feature type="chain" id="PRO_0000382165" description="ATP synthase subunit delta">
    <location>
        <begin position="1"/>
        <end position="262"/>
    </location>
</feature>
<organism>
    <name type="scientific">Tropheryma whipplei (strain TW08/27)</name>
    <name type="common">Whipple's bacillus</name>
    <dbReference type="NCBI Taxonomy" id="218496"/>
    <lineage>
        <taxon>Bacteria</taxon>
        <taxon>Bacillati</taxon>
        <taxon>Actinomycetota</taxon>
        <taxon>Actinomycetes</taxon>
        <taxon>Micrococcales</taxon>
        <taxon>Tropherymataceae</taxon>
        <taxon>Tropheryma</taxon>
    </lineage>
</organism>
<proteinExistence type="inferred from homology"/>
<sequence length="262" mass="29652">MPGSSSRSSLAHLRNRLSECSDLQSLYEVAVLLAISRRLRSSLVSRSLSCVSKQKLIAELTGKDPDAFICMAVSLRWSEPIDLLYAFEEMFIRASCTRRFADCRDFLDELFWVSSIVDSHKILDKTLSARFLPAYSKKQLISGVFAGAHEGTLAVLEYFACYMQKKRAFRECVFFAEKIVADELGAQIADVTTERPLSREQRDELVDVLSRRFKRRIILREVINEKVFGGVRVQVNHSVIDDTVAVHLNNLALSFGALETFS</sequence>
<dbReference type="EMBL" id="BX251411">
    <property type="protein sequence ID" value="CAD67013.1"/>
    <property type="molecule type" value="Genomic_DNA"/>
</dbReference>
<dbReference type="RefSeq" id="WP_011096293.1">
    <property type="nucleotide sequence ID" value="NC_004551.1"/>
</dbReference>
<dbReference type="SMR" id="Q83HY3"/>
<dbReference type="GeneID" id="67388114"/>
<dbReference type="KEGG" id="tws:TW341"/>
<dbReference type="HOGENOM" id="CLU_1061480_0_0_11"/>
<dbReference type="GO" id="GO:0005886">
    <property type="term" value="C:plasma membrane"/>
    <property type="evidence" value="ECO:0007669"/>
    <property type="project" value="UniProtKB-SubCell"/>
</dbReference>
<dbReference type="GO" id="GO:0045259">
    <property type="term" value="C:proton-transporting ATP synthase complex"/>
    <property type="evidence" value="ECO:0007669"/>
    <property type="project" value="UniProtKB-KW"/>
</dbReference>
<dbReference type="GO" id="GO:0046933">
    <property type="term" value="F:proton-transporting ATP synthase activity, rotational mechanism"/>
    <property type="evidence" value="ECO:0007669"/>
    <property type="project" value="UniProtKB-UniRule"/>
</dbReference>
<dbReference type="HAMAP" id="MF_01416">
    <property type="entry name" value="ATP_synth_delta_bact"/>
    <property type="match status" value="1"/>
</dbReference>
<dbReference type="InterPro" id="IPR020781">
    <property type="entry name" value="ATPase_OSCP/d_CS"/>
</dbReference>
<dbReference type="InterPro" id="IPR000711">
    <property type="entry name" value="ATPase_OSCP/dsu"/>
</dbReference>
<dbReference type="Pfam" id="PF00213">
    <property type="entry name" value="OSCP"/>
    <property type="match status" value="1"/>
</dbReference>
<dbReference type="PROSITE" id="PS00389">
    <property type="entry name" value="ATPASE_DELTA"/>
    <property type="match status" value="1"/>
</dbReference>
<protein>
    <recommendedName>
        <fullName evidence="1">ATP synthase subunit delta</fullName>
    </recommendedName>
    <alternativeName>
        <fullName evidence="1">ATP synthase F(1) sector subunit delta</fullName>
    </alternativeName>
    <alternativeName>
        <fullName evidence="1">F-type ATPase subunit delta</fullName>
        <shortName evidence="1">F-ATPase subunit delta</shortName>
    </alternativeName>
</protein>
<comment type="function">
    <text evidence="1">F(1)F(0) ATP synthase produces ATP from ADP in the presence of a proton or sodium gradient. F-type ATPases consist of two structural domains, F(1) containing the extramembraneous catalytic core and F(0) containing the membrane proton channel, linked together by a central stalk and a peripheral stalk. During catalysis, ATP synthesis in the catalytic domain of F(1) is coupled via a rotary mechanism of the central stalk subunits to proton translocation.</text>
</comment>
<comment type="function">
    <text evidence="1">This protein is part of the stalk that links CF(0) to CF(1). It either transmits conformational changes from CF(0) to CF(1) or is implicated in proton conduction.</text>
</comment>
<comment type="subunit">
    <text evidence="1">F-type ATPases have 2 components, F(1) - the catalytic core - and F(0) - the membrane proton channel. F(1) has five subunits: alpha(3), beta(3), gamma(1), delta(1), epsilon(1). F(0) has three main subunits: a(1), b(2) and c(10-14). The alpha and beta chains form an alternating ring which encloses part of the gamma chain. F(1) is attached to F(0) by a central stalk formed by the gamma and epsilon chains, while a peripheral stalk is formed by the delta and b chains.</text>
</comment>
<comment type="subcellular location">
    <subcellularLocation>
        <location evidence="1">Cell membrane</location>
        <topology evidence="1">Peripheral membrane protein</topology>
    </subcellularLocation>
</comment>
<comment type="similarity">
    <text evidence="1">Belongs to the ATPase delta chain family.</text>
</comment>
<evidence type="ECO:0000255" key="1">
    <source>
        <dbReference type="HAMAP-Rule" id="MF_01416"/>
    </source>
</evidence>
<accession>Q83HY3</accession>
<keyword id="KW-0066">ATP synthesis</keyword>
<keyword id="KW-1003">Cell membrane</keyword>
<keyword id="KW-0139">CF(1)</keyword>
<keyword id="KW-0375">Hydrogen ion transport</keyword>
<keyword id="KW-0406">Ion transport</keyword>
<keyword id="KW-0472">Membrane</keyword>
<keyword id="KW-0813">Transport</keyword>
<name>ATPD_TROW8</name>